<evidence type="ECO:0000255" key="1">
    <source>
        <dbReference type="HAMAP-Rule" id="MF_01369"/>
    </source>
</evidence>
<evidence type="ECO:0000305" key="2"/>
<feature type="chain" id="PRO_1000068155" description="Large ribosomal subunit protein uL23">
    <location>
        <begin position="1"/>
        <end position="100"/>
    </location>
</feature>
<accession>A1S220</accession>
<organism>
    <name type="scientific">Shewanella amazonensis (strain ATCC BAA-1098 / SB2B)</name>
    <dbReference type="NCBI Taxonomy" id="326297"/>
    <lineage>
        <taxon>Bacteria</taxon>
        <taxon>Pseudomonadati</taxon>
        <taxon>Pseudomonadota</taxon>
        <taxon>Gammaproteobacteria</taxon>
        <taxon>Alteromonadales</taxon>
        <taxon>Shewanellaceae</taxon>
        <taxon>Shewanella</taxon>
    </lineage>
</organism>
<gene>
    <name evidence="1" type="primary">rplW</name>
    <name type="ordered locus">Sama_0215</name>
</gene>
<protein>
    <recommendedName>
        <fullName evidence="1">Large ribosomal subunit protein uL23</fullName>
    </recommendedName>
    <alternativeName>
        <fullName evidence="2">50S ribosomal protein L23</fullName>
    </alternativeName>
</protein>
<dbReference type="EMBL" id="CP000507">
    <property type="protein sequence ID" value="ABL98426.1"/>
    <property type="molecule type" value="Genomic_DNA"/>
</dbReference>
<dbReference type="RefSeq" id="WP_011758336.1">
    <property type="nucleotide sequence ID" value="NC_008700.1"/>
</dbReference>
<dbReference type="SMR" id="A1S220"/>
<dbReference type="STRING" id="326297.Sama_0215"/>
<dbReference type="KEGG" id="saz:Sama_0215"/>
<dbReference type="eggNOG" id="COG0089">
    <property type="taxonomic scope" value="Bacteria"/>
</dbReference>
<dbReference type="HOGENOM" id="CLU_037562_3_1_6"/>
<dbReference type="OrthoDB" id="9793353at2"/>
<dbReference type="Proteomes" id="UP000009175">
    <property type="component" value="Chromosome"/>
</dbReference>
<dbReference type="GO" id="GO:1990904">
    <property type="term" value="C:ribonucleoprotein complex"/>
    <property type="evidence" value="ECO:0007669"/>
    <property type="project" value="UniProtKB-KW"/>
</dbReference>
<dbReference type="GO" id="GO:0005840">
    <property type="term" value="C:ribosome"/>
    <property type="evidence" value="ECO:0007669"/>
    <property type="project" value="UniProtKB-KW"/>
</dbReference>
<dbReference type="GO" id="GO:0019843">
    <property type="term" value="F:rRNA binding"/>
    <property type="evidence" value="ECO:0007669"/>
    <property type="project" value="UniProtKB-UniRule"/>
</dbReference>
<dbReference type="GO" id="GO:0003735">
    <property type="term" value="F:structural constituent of ribosome"/>
    <property type="evidence" value="ECO:0007669"/>
    <property type="project" value="InterPro"/>
</dbReference>
<dbReference type="GO" id="GO:0006412">
    <property type="term" value="P:translation"/>
    <property type="evidence" value="ECO:0007669"/>
    <property type="project" value="UniProtKB-UniRule"/>
</dbReference>
<dbReference type="FunFam" id="3.30.70.330:FF:000001">
    <property type="entry name" value="50S ribosomal protein L23"/>
    <property type="match status" value="1"/>
</dbReference>
<dbReference type="Gene3D" id="3.30.70.330">
    <property type="match status" value="1"/>
</dbReference>
<dbReference type="HAMAP" id="MF_01369_B">
    <property type="entry name" value="Ribosomal_uL23_B"/>
    <property type="match status" value="1"/>
</dbReference>
<dbReference type="InterPro" id="IPR012677">
    <property type="entry name" value="Nucleotide-bd_a/b_plait_sf"/>
</dbReference>
<dbReference type="InterPro" id="IPR013025">
    <property type="entry name" value="Ribosomal_uL23-like"/>
</dbReference>
<dbReference type="InterPro" id="IPR012678">
    <property type="entry name" value="Ribosomal_uL23/eL15/eS24_sf"/>
</dbReference>
<dbReference type="InterPro" id="IPR001014">
    <property type="entry name" value="Ribosomal_uL23_CS"/>
</dbReference>
<dbReference type="NCBIfam" id="NF004358">
    <property type="entry name" value="PRK05738.1-1"/>
    <property type="match status" value="1"/>
</dbReference>
<dbReference type="NCBIfam" id="NF004359">
    <property type="entry name" value="PRK05738.1-3"/>
    <property type="match status" value="1"/>
</dbReference>
<dbReference type="NCBIfam" id="NF004360">
    <property type="entry name" value="PRK05738.1-5"/>
    <property type="match status" value="1"/>
</dbReference>
<dbReference type="NCBIfam" id="NF004363">
    <property type="entry name" value="PRK05738.2-4"/>
    <property type="match status" value="1"/>
</dbReference>
<dbReference type="PANTHER" id="PTHR11620">
    <property type="entry name" value="60S RIBOSOMAL PROTEIN L23A"/>
    <property type="match status" value="1"/>
</dbReference>
<dbReference type="Pfam" id="PF00276">
    <property type="entry name" value="Ribosomal_L23"/>
    <property type="match status" value="1"/>
</dbReference>
<dbReference type="SUPFAM" id="SSF54189">
    <property type="entry name" value="Ribosomal proteins S24e, L23 and L15e"/>
    <property type="match status" value="1"/>
</dbReference>
<dbReference type="PROSITE" id="PS00050">
    <property type="entry name" value="RIBOSOMAL_L23"/>
    <property type="match status" value="1"/>
</dbReference>
<sequence length="100" mass="10975">MIREERLLKVILAPHISEKSTVVAEKTNTVVFRVAIDATKSEIKAAVEKLFEVEVAGVRTLINKGKTKRHGARVGRRSDWKKAYVTLAAGADIDFVGAEA</sequence>
<keyword id="KW-1185">Reference proteome</keyword>
<keyword id="KW-0687">Ribonucleoprotein</keyword>
<keyword id="KW-0689">Ribosomal protein</keyword>
<keyword id="KW-0694">RNA-binding</keyword>
<keyword id="KW-0699">rRNA-binding</keyword>
<proteinExistence type="inferred from homology"/>
<reference key="1">
    <citation type="submission" date="2006-12" db="EMBL/GenBank/DDBJ databases">
        <title>Complete sequence of Shewanella amazonensis SB2B.</title>
        <authorList>
            <consortium name="US DOE Joint Genome Institute"/>
            <person name="Copeland A."/>
            <person name="Lucas S."/>
            <person name="Lapidus A."/>
            <person name="Barry K."/>
            <person name="Detter J.C."/>
            <person name="Glavina del Rio T."/>
            <person name="Hammon N."/>
            <person name="Israni S."/>
            <person name="Dalin E."/>
            <person name="Tice H."/>
            <person name="Pitluck S."/>
            <person name="Munk A.C."/>
            <person name="Brettin T."/>
            <person name="Bruce D."/>
            <person name="Han C."/>
            <person name="Tapia R."/>
            <person name="Gilna P."/>
            <person name="Schmutz J."/>
            <person name="Larimer F."/>
            <person name="Land M."/>
            <person name="Hauser L."/>
            <person name="Kyrpides N."/>
            <person name="Mikhailova N."/>
            <person name="Fredrickson J."/>
            <person name="Richardson P."/>
        </authorList>
    </citation>
    <scope>NUCLEOTIDE SEQUENCE [LARGE SCALE GENOMIC DNA]</scope>
    <source>
        <strain>ATCC BAA-1098 / SB2B</strain>
    </source>
</reference>
<name>RL23_SHEAM</name>
<comment type="function">
    <text evidence="1">One of the early assembly proteins it binds 23S rRNA. One of the proteins that surrounds the polypeptide exit tunnel on the outside of the ribosome. Forms the main docking site for trigger factor binding to the ribosome.</text>
</comment>
<comment type="subunit">
    <text evidence="1">Part of the 50S ribosomal subunit. Contacts protein L29, and trigger factor when it is bound to the ribosome.</text>
</comment>
<comment type="similarity">
    <text evidence="1">Belongs to the universal ribosomal protein uL23 family.</text>
</comment>